<accession>Q72W11</accession>
<comment type="function">
    <text evidence="1">Necessary for normal cell division and for the maintenance of normal septation.</text>
</comment>
<comment type="cofactor">
    <cofactor evidence="1">
        <name>Mg(2+)</name>
        <dbReference type="ChEBI" id="CHEBI:18420"/>
    </cofactor>
</comment>
<comment type="similarity">
    <text evidence="1">Belongs to the TRAFAC class TrmE-Era-EngA-EngB-Septin-like GTPase superfamily. EngB GTPase family.</text>
</comment>
<sequence>MNEDPQKKDEPFFKDVEFKASYGKADQIPSQGTPQIAFAGRSNAGKSSLLNAILERKSLAKVSSTPGKTKLLNFFFVNHSIYLVDLPGFGYSANSHKDHEAMMGLLMDYLNLAKDLKCLFLVCDSQRELPEEELELIGTCFERNIKPVLVRTKIDKLNQSDLSKLRKKMKNIHELYPMLETVLVSNKSGKGLPELRKIVYSLIETVKNRLERIEEIS</sequence>
<reference key="1">
    <citation type="journal article" date="2004" name="J. Bacteriol.">
        <title>Comparative genomics of two Leptospira interrogans serovars reveals novel insights into physiology and pathogenesis.</title>
        <authorList>
            <person name="Nascimento A.L.T.O."/>
            <person name="Ko A.I."/>
            <person name="Martins E.A.L."/>
            <person name="Monteiro-Vitorello C.B."/>
            <person name="Ho P.L."/>
            <person name="Haake D.A."/>
            <person name="Verjovski-Almeida S."/>
            <person name="Hartskeerl R.A."/>
            <person name="Marques M.V."/>
            <person name="Oliveira M.C."/>
            <person name="Menck C.F.M."/>
            <person name="Leite L.C.C."/>
            <person name="Carrer H."/>
            <person name="Coutinho L.L."/>
            <person name="Degrave W.M."/>
            <person name="Dellagostin O.A."/>
            <person name="El-Dorry H."/>
            <person name="Ferro E.S."/>
            <person name="Ferro M.I.T."/>
            <person name="Furlan L.R."/>
            <person name="Gamberini M."/>
            <person name="Giglioti E.A."/>
            <person name="Goes-Neto A."/>
            <person name="Goldman G.H."/>
            <person name="Goldman M.H.S."/>
            <person name="Harakava R."/>
            <person name="Jeronimo S.M.B."/>
            <person name="Junqueira-de-Azevedo I.L.M."/>
            <person name="Kimura E.T."/>
            <person name="Kuramae E.E."/>
            <person name="Lemos E.G.M."/>
            <person name="Lemos M.V.F."/>
            <person name="Marino C.L."/>
            <person name="Nunes L.R."/>
            <person name="de Oliveira R.C."/>
            <person name="Pereira G.G."/>
            <person name="Reis M.S."/>
            <person name="Schriefer A."/>
            <person name="Siqueira W.J."/>
            <person name="Sommer P."/>
            <person name="Tsai S.M."/>
            <person name="Simpson A.J.G."/>
            <person name="Ferro J.A."/>
            <person name="Camargo L.E.A."/>
            <person name="Kitajima J.P."/>
            <person name="Setubal J.C."/>
            <person name="Van Sluys M.A."/>
        </authorList>
    </citation>
    <scope>NUCLEOTIDE SEQUENCE [LARGE SCALE GENOMIC DNA]</scope>
    <source>
        <strain>Fiocruz L1-130</strain>
    </source>
</reference>
<dbReference type="EMBL" id="AE016823">
    <property type="protein sequence ID" value="AAS68763.1"/>
    <property type="molecule type" value="Genomic_DNA"/>
</dbReference>
<dbReference type="SMR" id="Q72W11"/>
<dbReference type="KEGG" id="lic:LIC_10130"/>
<dbReference type="HOGENOM" id="CLU_033732_3_0_12"/>
<dbReference type="Proteomes" id="UP000007037">
    <property type="component" value="Chromosome I"/>
</dbReference>
<dbReference type="GO" id="GO:0005829">
    <property type="term" value="C:cytosol"/>
    <property type="evidence" value="ECO:0007669"/>
    <property type="project" value="TreeGrafter"/>
</dbReference>
<dbReference type="GO" id="GO:0005525">
    <property type="term" value="F:GTP binding"/>
    <property type="evidence" value="ECO:0007669"/>
    <property type="project" value="UniProtKB-UniRule"/>
</dbReference>
<dbReference type="GO" id="GO:0046872">
    <property type="term" value="F:metal ion binding"/>
    <property type="evidence" value="ECO:0007669"/>
    <property type="project" value="UniProtKB-KW"/>
</dbReference>
<dbReference type="GO" id="GO:0000917">
    <property type="term" value="P:division septum assembly"/>
    <property type="evidence" value="ECO:0007669"/>
    <property type="project" value="UniProtKB-KW"/>
</dbReference>
<dbReference type="CDD" id="cd01876">
    <property type="entry name" value="YihA_EngB"/>
    <property type="match status" value="1"/>
</dbReference>
<dbReference type="FunFam" id="3.40.50.300:FF:001611">
    <property type="entry name" value="Probable GTP-binding protein EngB"/>
    <property type="match status" value="1"/>
</dbReference>
<dbReference type="Gene3D" id="3.40.50.300">
    <property type="entry name" value="P-loop containing nucleotide triphosphate hydrolases"/>
    <property type="match status" value="1"/>
</dbReference>
<dbReference type="HAMAP" id="MF_00321">
    <property type="entry name" value="GTPase_EngB"/>
    <property type="match status" value="1"/>
</dbReference>
<dbReference type="InterPro" id="IPR030393">
    <property type="entry name" value="G_ENGB_dom"/>
</dbReference>
<dbReference type="InterPro" id="IPR006073">
    <property type="entry name" value="GTP-bd"/>
</dbReference>
<dbReference type="InterPro" id="IPR019987">
    <property type="entry name" value="GTP-bd_ribosome_bio_YsxC"/>
</dbReference>
<dbReference type="InterPro" id="IPR027417">
    <property type="entry name" value="P-loop_NTPase"/>
</dbReference>
<dbReference type="NCBIfam" id="TIGR03598">
    <property type="entry name" value="GTPase_YsxC"/>
    <property type="match status" value="1"/>
</dbReference>
<dbReference type="PANTHER" id="PTHR11649:SF13">
    <property type="entry name" value="ENGB-TYPE G DOMAIN-CONTAINING PROTEIN"/>
    <property type="match status" value="1"/>
</dbReference>
<dbReference type="PANTHER" id="PTHR11649">
    <property type="entry name" value="MSS1/TRME-RELATED GTP-BINDING PROTEIN"/>
    <property type="match status" value="1"/>
</dbReference>
<dbReference type="Pfam" id="PF01926">
    <property type="entry name" value="MMR_HSR1"/>
    <property type="match status" value="1"/>
</dbReference>
<dbReference type="SUPFAM" id="SSF52540">
    <property type="entry name" value="P-loop containing nucleoside triphosphate hydrolases"/>
    <property type="match status" value="1"/>
</dbReference>
<dbReference type="PROSITE" id="PS51706">
    <property type="entry name" value="G_ENGB"/>
    <property type="match status" value="1"/>
</dbReference>
<evidence type="ECO:0000255" key="1">
    <source>
        <dbReference type="HAMAP-Rule" id="MF_00321"/>
    </source>
</evidence>
<keyword id="KW-0131">Cell cycle</keyword>
<keyword id="KW-0132">Cell division</keyword>
<keyword id="KW-0342">GTP-binding</keyword>
<keyword id="KW-0460">Magnesium</keyword>
<keyword id="KW-0479">Metal-binding</keyword>
<keyword id="KW-0547">Nucleotide-binding</keyword>
<keyword id="KW-0717">Septation</keyword>
<protein>
    <recommendedName>
        <fullName evidence="1">Probable GTP-binding protein EngB</fullName>
    </recommendedName>
</protein>
<feature type="chain" id="PRO_0000157758" description="Probable GTP-binding protein EngB">
    <location>
        <begin position="1"/>
        <end position="217"/>
    </location>
</feature>
<feature type="domain" description="EngB-type G" evidence="1">
    <location>
        <begin position="32"/>
        <end position="205"/>
    </location>
</feature>
<feature type="binding site" evidence="1">
    <location>
        <begin position="40"/>
        <end position="47"/>
    </location>
    <ligand>
        <name>GTP</name>
        <dbReference type="ChEBI" id="CHEBI:37565"/>
    </ligand>
</feature>
<feature type="binding site" evidence="1">
    <location>
        <position position="47"/>
    </location>
    <ligand>
        <name>Mg(2+)</name>
        <dbReference type="ChEBI" id="CHEBI:18420"/>
    </ligand>
</feature>
<feature type="binding site" evidence="1">
    <location>
        <begin position="67"/>
        <end position="71"/>
    </location>
    <ligand>
        <name>GTP</name>
        <dbReference type="ChEBI" id="CHEBI:37565"/>
    </ligand>
</feature>
<feature type="binding site" evidence="1">
    <location>
        <position position="69"/>
    </location>
    <ligand>
        <name>Mg(2+)</name>
        <dbReference type="ChEBI" id="CHEBI:18420"/>
    </ligand>
</feature>
<feature type="binding site" evidence="1">
    <location>
        <begin position="85"/>
        <end position="88"/>
    </location>
    <ligand>
        <name>GTP</name>
        <dbReference type="ChEBI" id="CHEBI:37565"/>
    </ligand>
</feature>
<feature type="binding site" evidence="1">
    <location>
        <begin position="152"/>
        <end position="155"/>
    </location>
    <ligand>
        <name>GTP</name>
        <dbReference type="ChEBI" id="CHEBI:37565"/>
    </ligand>
</feature>
<feature type="binding site" evidence="1">
    <location>
        <begin position="184"/>
        <end position="186"/>
    </location>
    <ligand>
        <name>GTP</name>
        <dbReference type="ChEBI" id="CHEBI:37565"/>
    </ligand>
</feature>
<organism>
    <name type="scientific">Leptospira interrogans serogroup Icterohaemorrhagiae serovar copenhageni (strain Fiocruz L1-130)</name>
    <dbReference type="NCBI Taxonomy" id="267671"/>
    <lineage>
        <taxon>Bacteria</taxon>
        <taxon>Pseudomonadati</taxon>
        <taxon>Spirochaetota</taxon>
        <taxon>Spirochaetia</taxon>
        <taxon>Leptospirales</taxon>
        <taxon>Leptospiraceae</taxon>
        <taxon>Leptospira</taxon>
    </lineage>
</organism>
<gene>
    <name evidence="1" type="primary">engB</name>
    <name type="ordered locus">LIC_10130</name>
</gene>
<proteinExistence type="inferred from homology"/>
<name>ENGB_LEPIC</name>